<accession>B9EBD3</accession>
<gene>
    <name evidence="1" type="primary">hslV</name>
    <name type="ordered locus">MCCL_0837</name>
</gene>
<protein>
    <recommendedName>
        <fullName evidence="1">ATP-dependent protease subunit HslV</fullName>
        <ecNumber evidence="1">3.4.25.2</ecNumber>
    </recommendedName>
</protein>
<keyword id="KW-0021">Allosteric enzyme</keyword>
<keyword id="KW-0963">Cytoplasm</keyword>
<keyword id="KW-0378">Hydrolase</keyword>
<keyword id="KW-0479">Metal-binding</keyword>
<keyword id="KW-0645">Protease</keyword>
<keyword id="KW-1185">Reference proteome</keyword>
<keyword id="KW-0915">Sodium</keyword>
<keyword id="KW-0346">Stress response</keyword>
<keyword id="KW-0888">Threonine protease</keyword>
<name>HSLV_MACCJ</name>
<proteinExistence type="inferred from homology"/>
<evidence type="ECO:0000255" key="1">
    <source>
        <dbReference type="HAMAP-Rule" id="MF_00248"/>
    </source>
</evidence>
<sequence length="180" mass="19655">MNNQLHATTIFAIRHNGRAAMSGDGQVTLGQQVIMKQTARKVRRLFNDEVVAGFAGSVADAFTLFEMFEAKLYEYNGNLSRAAVELAKEWRGDKMLRQLEAMLIVMNKDELLVVSGTGEVIQPDDDIIAIGSGGNYALSAGRALKRHASTLSARDIAQASLETAADICVFTNHNIIIEEI</sequence>
<organism>
    <name type="scientific">Macrococcus caseolyticus (strain JCSC5402)</name>
    <name type="common">Macrococcoides caseolyticum</name>
    <dbReference type="NCBI Taxonomy" id="458233"/>
    <lineage>
        <taxon>Bacteria</taxon>
        <taxon>Bacillati</taxon>
        <taxon>Bacillota</taxon>
        <taxon>Bacilli</taxon>
        <taxon>Bacillales</taxon>
        <taxon>Staphylococcaceae</taxon>
        <taxon>Macrococcoides</taxon>
    </lineage>
</organism>
<feature type="chain" id="PRO_1000125411" description="ATP-dependent protease subunit HslV">
    <location>
        <begin position="1"/>
        <end position="180"/>
    </location>
</feature>
<feature type="active site" evidence="1">
    <location>
        <position position="8"/>
    </location>
</feature>
<feature type="binding site" evidence="1">
    <location>
        <position position="165"/>
    </location>
    <ligand>
        <name>Na(+)</name>
        <dbReference type="ChEBI" id="CHEBI:29101"/>
    </ligand>
</feature>
<feature type="binding site" evidence="1">
    <location>
        <position position="168"/>
    </location>
    <ligand>
        <name>Na(+)</name>
        <dbReference type="ChEBI" id="CHEBI:29101"/>
    </ligand>
</feature>
<feature type="binding site" evidence="1">
    <location>
        <position position="171"/>
    </location>
    <ligand>
        <name>Na(+)</name>
        <dbReference type="ChEBI" id="CHEBI:29101"/>
    </ligand>
</feature>
<dbReference type="EC" id="3.4.25.2" evidence="1"/>
<dbReference type="EMBL" id="AP009484">
    <property type="protein sequence ID" value="BAH17544.1"/>
    <property type="molecule type" value="Genomic_DNA"/>
</dbReference>
<dbReference type="RefSeq" id="WP_012656744.1">
    <property type="nucleotide sequence ID" value="NC_011999.1"/>
</dbReference>
<dbReference type="SMR" id="B9EBD3"/>
<dbReference type="STRING" id="458233.MCCL_0837"/>
<dbReference type="MEROPS" id="T01.007"/>
<dbReference type="GeneID" id="61129254"/>
<dbReference type="KEGG" id="mcl:MCCL_0837"/>
<dbReference type="eggNOG" id="COG5405">
    <property type="taxonomic scope" value="Bacteria"/>
</dbReference>
<dbReference type="HOGENOM" id="CLU_093872_1_0_9"/>
<dbReference type="OrthoDB" id="9804884at2"/>
<dbReference type="Proteomes" id="UP000001383">
    <property type="component" value="Chromosome"/>
</dbReference>
<dbReference type="GO" id="GO:0009376">
    <property type="term" value="C:HslUV protease complex"/>
    <property type="evidence" value="ECO:0007669"/>
    <property type="project" value="UniProtKB-UniRule"/>
</dbReference>
<dbReference type="GO" id="GO:0005839">
    <property type="term" value="C:proteasome core complex"/>
    <property type="evidence" value="ECO:0007669"/>
    <property type="project" value="InterPro"/>
</dbReference>
<dbReference type="GO" id="GO:0046872">
    <property type="term" value="F:metal ion binding"/>
    <property type="evidence" value="ECO:0007669"/>
    <property type="project" value="UniProtKB-KW"/>
</dbReference>
<dbReference type="GO" id="GO:0004298">
    <property type="term" value="F:threonine-type endopeptidase activity"/>
    <property type="evidence" value="ECO:0007669"/>
    <property type="project" value="UniProtKB-KW"/>
</dbReference>
<dbReference type="GO" id="GO:0051603">
    <property type="term" value="P:proteolysis involved in protein catabolic process"/>
    <property type="evidence" value="ECO:0007669"/>
    <property type="project" value="InterPro"/>
</dbReference>
<dbReference type="CDD" id="cd01913">
    <property type="entry name" value="protease_HslV"/>
    <property type="match status" value="1"/>
</dbReference>
<dbReference type="Gene3D" id="3.60.20.10">
    <property type="entry name" value="Glutamine Phosphoribosylpyrophosphate, subunit 1, domain 1"/>
    <property type="match status" value="1"/>
</dbReference>
<dbReference type="HAMAP" id="MF_00248">
    <property type="entry name" value="HslV"/>
    <property type="match status" value="1"/>
</dbReference>
<dbReference type="InterPro" id="IPR022281">
    <property type="entry name" value="ATP-dep_Prtase_HsIV_su"/>
</dbReference>
<dbReference type="InterPro" id="IPR029055">
    <property type="entry name" value="Ntn_hydrolases_N"/>
</dbReference>
<dbReference type="InterPro" id="IPR001353">
    <property type="entry name" value="Proteasome_sua/b"/>
</dbReference>
<dbReference type="InterPro" id="IPR023333">
    <property type="entry name" value="Proteasome_suB-type"/>
</dbReference>
<dbReference type="NCBIfam" id="TIGR03692">
    <property type="entry name" value="ATP_dep_HslV"/>
    <property type="match status" value="1"/>
</dbReference>
<dbReference type="NCBIfam" id="NF003964">
    <property type="entry name" value="PRK05456.1"/>
    <property type="match status" value="1"/>
</dbReference>
<dbReference type="PANTHER" id="PTHR32194:SF0">
    <property type="entry name" value="ATP-DEPENDENT PROTEASE SUBUNIT HSLV"/>
    <property type="match status" value="1"/>
</dbReference>
<dbReference type="PANTHER" id="PTHR32194">
    <property type="entry name" value="METALLOPROTEASE TLDD"/>
    <property type="match status" value="1"/>
</dbReference>
<dbReference type="Pfam" id="PF00227">
    <property type="entry name" value="Proteasome"/>
    <property type="match status" value="1"/>
</dbReference>
<dbReference type="PIRSF" id="PIRSF039093">
    <property type="entry name" value="HslV"/>
    <property type="match status" value="1"/>
</dbReference>
<dbReference type="SUPFAM" id="SSF56235">
    <property type="entry name" value="N-terminal nucleophile aminohydrolases (Ntn hydrolases)"/>
    <property type="match status" value="1"/>
</dbReference>
<dbReference type="PROSITE" id="PS51476">
    <property type="entry name" value="PROTEASOME_BETA_2"/>
    <property type="match status" value="1"/>
</dbReference>
<reference key="1">
    <citation type="journal article" date="2009" name="J. Bacteriol.">
        <title>Complete genome sequence of Macrococcus caseolyticus strain JCSCS5402, reflecting the ancestral genome of the human-pathogenic staphylococci.</title>
        <authorList>
            <person name="Baba T."/>
            <person name="Kuwahara-Arai K."/>
            <person name="Uchiyama I."/>
            <person name="Takeuchi F."/>
            <person name="Ito T."/>
            <person name="Hiramatsu K."/>
        </authorList>
    </citation>
    <scope>NUCLEOTIDE SEQUENCE [LARGE SCALE GENOMIC DNA]</scope>
    <source>
        <strain>JCSC5402</strain>
    </source>
</reference>
<comment type="function">
    <text evidence="1">Protease subunit of a proteasome-like degradation complex believed to be a general protein degrading machinery.</text>
</comment>
<comment type="catalytic activity">
    <reaction evidence="1">
        <text>ATP-dependent cleavage of peptide bonds with broad specificity.</text>
        <dbReference type="EC" id="3.4.25.2"/>
    </reaction>
</comment>
<comment type="activity regulation">
    <text evidence="1">Allosterically activated by HslU binding.</text>
</comment>
<comment type="subunit">
    <text evidence="1">A double ring-shaped homohexamer of HslV is capped on each side by a ring-shaped HslU homohexamer. The assembly of the HslU/HslV complex is dependent on binding of ATP.</text>
</comment>
<comment type="subcellular location">
    <subcellularLocation>
        <location evidence="1">Cytoplasm</location>
    </subcellularLocation>
</comment>
<comment type="similarity">
    <text evidence="1">Belongs to the peptidase T1B family. HslV subfamily.</text>
</comment>